<organismHost>
    <name type="scientific">Ornithodoros</name>
    <name type="common">relapsing fever ticks</name>
    <dbReference type="NCBI Taxonomy" id="6937"/>
</organismHost>
<organismHost>
    <name type="scientific">Phacochoerus aethiopicus</name>
    <name type="common">Warthog</name>
    <dbReference type="NCBI Taxonomy" id="85517"/>
</organismHost>
<organismHost>
    <name type="scientific">Phacochoerus africanus</name>
    <name type="common">Warthog</name>
    <dbReference type="NCBI Taxonomy" id="41426"/>
</organismHost>
<organismHost>
    <name type="scientific">Potamochoerus larvatus</name>
    <name type="common">Bushpig</name>
    <dbReference type="NCBI Taxonomy" id="273792"/>
</organismHost>
<organismHost>
    <name type="scientific">Sus scrofa</name>
    <name type="common">Pig</name>
    <dbReference type="NCBI Taxonomy" id="9823"/>
</organismHost>
<dbReference type="EMBL" id="AY261366">
    <property type="status" value="NOT_ANNOTATED_CDS"/>
    <property type="molecule type" value="Genomic_DNA"/>
</dbReference>
<dbReference type="Proteomes" id="UP000000858">
    <property type="component" value="Segment"/>
</dbReference>
<dbReference type="GO" id="GO:0033644">
    <property type="term" value="C:host cell membrane"/>
    <property type="evidence" value="ECO:0007669"/>
    <property type="project" value="UniProtKB-SubCell"/>
</dbReference>
<dbReference type="GO" id="GO:0016020">
    <property type="term" value="C:membrane"/>
    <property type="evidence" value="ECO:0007669"/>
    <property type="project" value="UniProtKB-KW"/>
</dbReference>
<dbReference type="InterPro" id="IPR004848">
    <property type="entry name" value="ASFV_fam_110"/>
</dbReference>
<dbReference type="Pfam" id="PF01639">
    <property type="entry name" value="v110"/>
    <property type="match status" value="1"/>
</dbReference>
<comment type="function">
    <text evidence="1">Plays a role in virus cell tropism, and may be required for efficient virus replication in macrophages.</text>
</comment>
<comment type="subcellular location">
    <subcellularLocation>
        <location evidence="3">Host membrane</location>
        <topology evidence="3">Multi-pass membrane protein</topology>
    </subcellularLocation>
</comment>
<comment type="similarity">
    <text evidence="3">Belongs to the asfivirus MGF 110 family.</text>
</comment>
<proteinExistence type="inferred from homology"/>
<keyword id="KW-1043">Host membrane</keyword>
<keyword id="KW-0472">Membrane</keyword>
<keyword id="KW-0812">Transmembrane</keyword>
<keyword id="KW-1133">Transmembrane helix</keyword>
<protein>
    <recommendedName>
        <fullName>Protein MGF 110-13L</fullName>
    </recommendedName>
</protein>
<accession>P0C9K0</accession>
<gene>
    <name type="ordered locus">War-020</name>
</gene>
<reference key="1">
    <citation type="submission" date="2003-03" db="EMBL/GenBank/DDBJ databases">
        <title>African swine fever virus genomes.</title>
        <authorList>
            <person name="Kutish G.F."/>
            <person name="Rock D.L."/>
        </authorList>
    </citation>
    <scope>NUCLEOTIDE SEQUENCE [LARGE SCALE GENOMIC DNA]</scope>
</reference>
<organism>
    <name type="scientific">African swine fever virus (isolate Warthog/Namibia/Wart80/1980)</name>
    <name type="common">ASFV</name>
    <dbReference type="NCBI Taxonomy" id="561444"/>
    <lineage>
        <taxon>Viruses</taxon>
        <taxon>Varidnaviria</taxon>
        <taxon>Bamfordvirae</taxon>
        <taxon>Nucleocytoviricota</taxon>
        <taxon>Pokkesviricetes</taxon>
        <taxon>Asfuvirales</taxon>
        <taxon>Asfarviridae</taxon>
        <taxon>Asfivirus</taxon>
        <taxon>African swine fever virus</taxon>
    </lineage>
</organism>
<evidence type="ECO:0000250" key="1"/>
<evidence type="ECO:0000255" key="2"/>
<evidence type="ECO:0000305" key="3"/>
<feature type="chain" id="PRO_0000373222" description="Protein MGF 110-13L">
    <location>
        <begin position="1"/>
        <end position="160"/>
    </location>
</feature>
<feature type="transmembrane region" description="Helical" evidence="2">
    <location>
        <begin position="13"/>
        <end position="33"/>
    </location>
</feature>
<feature type="transmembrane region" description="Helical" evidence="2">
    <location>
        <begin position="35"/>
        <end position="55"/>
    </location>
</feature>
<sequence length="160" mass="19115">MGGGDYWPIIIRHCCFYLVFSIAFVGYIVFAYYKNLHLNTTMKLIALLCILIWLSQPGLNRPLSIFYMKQNLPRTYTPPIRELEYWCTYGKHCDFCWECRNGICKNKVWDDMPLIKQNDYISQCSIARYFDRCMYFIKPKTPYIHYMDCSQPTAYKGFSH</sequence>
<name>11013_ASFWA</name>